<sequence>MVVSAGPWSSEKAEMNILEINEKLRPQLAENKQQFRNLKERCFLTQLAGFLANRQKKYKYEECKDLIKFMLRNERQFKEEKLAEQLKQAEELRQYKVLVHSQERELTQLREKLREGRDASRSLNEHLQALLTPDEPDKSQGQDLQEQLAEGCRLAQQLVQKLSPENDEDEDEDVQVEEDEKVLESSAPREVQKAEESKVPEDSLEECAITCSNSHGPCDSIQPHKNIKITFEEDKVNSTVVVDRKSSHDECQDALNILPVPGPTSSATNVSMVVSAGPLSSEKAEMNILEINEKLRPQLAEKKQQFRSLKEKCFVTQLAGFLAKQQNKYKYEECKDLIKSMLRNELQFKEEKLAEQLKQAEELRQYKVLVHSQERELTQLREKLREGRDASRSLNEHLQALLTPDEPDKSQGQDLQEQLAEGCRLAQHLVQKLSPENDEDEDEDVQVEEDEKVLESSSPREMQKAEESKVPEDSLEECAITCSNSHGPCDSNQPHKNIKITFEEDKVNSSLVVDRESSHDECQDALNILPVPGPTSSATNVSMVVSAGPLSSEKAEMNILEINEKLRPQLAEKKQQFRSLKEKCFVTQVACFLAKQQNKYKYEECKDLLKSMLRNELQFKEEKLAEQLKQAEELRQYKVLVHSQERELTQLREKLREGRDASRSLNEHLQALLTPDEPDKSQGQDLQEQLAEGCRLAQHLVQKLSPENDNDDDEDVQVEVAEKVQKSSSPREMQKAEEKEVPEDSLEECAITCSNSHGPYDSNQPHRKTKITFEEDKVDSTLIGSSSHVEWEDAVHIIPENESDDEEEEEKGPVSPRNLQESEEEEVPQESWDEGYSTLSIPPERLASYQSYSSTFHSLEEQQVCMAVDIGRHRWDQVKKEDQEATGPRLSRELLAEKEPEVLQDSLDRCYSTPSVYLGLTDSCQPYRSAFYVLEQQRVGLAVDMDEIEKYQEVEEDQDPSCPRLSRELLAEKEPEVLQDSLDRCYSTPSGYLELPDLGQPYRSAVYSLEEQYLGLALDVDRIKKDQEEEEDQGPPCPRLSRELLEVVEPEVLQDSLDRCYSTPSSCLEQPDSCQPYRSSFYALEEKHVGFSLDVGEIEKKGKGKKRRGRRSKKKRRRGRKEGEEDQNPPCPRLSRELLAEKEPEVLQDSLDRWYSTPSVYLGLTDPCQPYRSAFYVLEQQRVGLAVDMDEIEKYQEVEEDQDPSCPRLSRELLAEKEPEVLQDSLDRCYSTPSGYLELPDLGQPYRSAVYSLEEQYLGLALDVDRIKKDQEEEEDQGPPCPRLSRELLEVVEPEVLQDSLDRCYSTPSSCLEQPDSCQPYRSSFYALEEKHVGFSLDVGEIEKKGKGKKRRGRRSKKKRRRGRKEGEEDQNPPCPRLNSVLMEVEEPEVLQDSLDRCYSTPSMYFELPDSFQHYRSVFYSFEEQHITFALDMDNSFFTLTVTSLHLVFQMGVIFPQ</sequence>
<keyword id="KW-0175">Coiled coil</keyword>
<keyword id="KW-0963">Cytoplasm</keyword>
<keyword id="KW-1185">Reference proteome</keyword>
<keyword id="KW-0677">Repeat</keyword>
<comment type="subcellular location">
    <subcellularLocation>
        <location evidence="6">Cytoplasm</location>
    </subcellularLocation>
</comment>
<comment type="tissue specificity">
    <text evidence="4 5">Widely expressed with highest levels in brain, ovary, mammary gland, skin and adipose tissue. Also expressed in testis. Detected in a number of tumors including osteosarcoma, mammary carcinoma and hepatocellular carcinoma.</text>
</comment>
<comment type="miscellaneous">
    <text>Encoded by one of the numerous copies of NBPF genes clustered in the p36, p12 and q21 region of the chromosome 1.</text>
</comment>
<comment type="similarity">
    <text evidence="6">Belongs to the NBPF family.</text>
</comment>
<comment type="sequence caution" evidence="6">
    <conflict type="erroneous initiation">
        <sequence resource="EMBL-CDS" id="CAI22485"/>
    </conflict>
</comment>
<organism>
    <name type="scientific">Homo sapiens</name>
    <name type="common">Human</name>
    <dbReference type="NCBI Taxonomy" id="9606"/>
    <lineage>
        <taxon>Eukaryota</taxon>
        <taxon>Metazoa</taxon>
        <taxon>Chordata</taxon>
        <taxon>Craniata</taxon>
        <taxon>Vertebrata</taxon>
        <taxon>Euteleostomi</taxon>
        <taxon>Mammalia</taxon>
        <taxon>Eutheria</taxon>
        <taxon>Euarchontoglires</taxon>
        <taxon>Primates</taxon>
        <taxon>Haplorrhini</taxon>
        <taxon>Catarrhini</taxon>
        <taxon>Hominidae</taxon>
        <taxon>Homo</taxon>
    </lineage>
</organism>
<proteinExistence type="evidence at transcript level"/>
<gene>
    <name evidence="7" type="primary">NBPF12</name>
    <name type="synonym">COAS1</name>
    <name type="synonym">KIAA1245</name>
</gene>
<name>NBPFC_HUMAN</name>
<protein>
    <recommendedName>
        <fullName evidence="6">NBPF family member NBPF12</fullName>
    </recommendedName>
    <alternativeName>
        <fullName>Chromosome 1 amplified sequence 1</fullName>
    </alternativeName>
    <alternativeName>
        <fullName>Neuroblastoma breakpoint family member 12</fullName>
    </alternativeName>
</protein>
<feature type="chain" id="PRO_0000288047" description="NBPF family member NBPF12">
    <location>
        <begin position="1"/>
        <end position="1457"/>
    </location>
</feature>
<feature type="domain" description="Olduvai 1" evidence="2">
    <location>
        <begin position="165"/>
        <end position="259"/>
    </location>
</feature>
<feature type="domain" description="Olduvai 2" evidence="2">
    <location>
        <begin position="436"/>
        <end position="530"/>
    </location>
</feature>
<feature type="domain" description="Olduvai 3" evidence="2">
    <location>
        <begin position="707"/>
        <end position="799"/>
    </location>
</feature>
<feature type="domain" description="Olduvai 4" evidence="2">
    <location>
        <begin position="800"/>
        <end position="871"/>
    </location>
</feature>
<feature type="domain" description="Olduvai 5" evidence="2">
    <location>
        <begin position="872"/>
        <end position="963"/>
    </location>
</feature>
<feature type="domain" description="Olduvai 6" evidence="2">
    <location>
        <begin position="966"/>
        <end position="1021"/>
    </location>
</feature>
<feature type="domain" description="Olduvai 7" evidence="2">
    <location>
        <begin position="1022"/>
        <end position="1114"/>
    </location>
</feature>
<feature type="domain" description="Olduvai 8" evidence="2">
    <location>
        <begin position="1115"/>
        <end position="1207"/>
    </location>
</feature>
<feature type="domain" description="Olduvai 9" evidence="2">
    <location>
        <begin position="1210"/>
        <end position="1265"/>
    </location>
</feature>
<feature type="domain" description="Olduvai 10" evidence="2">
    <location>
        <begin position="1266"/>
        <end position="1358"/>
    </location>
</feature>
<feature type="domain" description="Olduvai 11" evidence="2">
    <location>
        <begin position="1359"/>
        <end position="1457"/>
    </location>
</feature>
<feature type="region of interest" description="Disordered" evidence="3">
    <location>
        <begin position="162"/>
        <end position="200"/>
    </location>
</feature>
<feature type="region of interest" description="Disordered" evidence="3">
    <location>
        <begin position="432"/>
        <end position="472"/>
    </location>
</feature>
<feature type="region of interest" description="Disordered" evidence="3">
    <location>
        <begin position="721"/>
        <end position="746"/>
    </location>
</feature>
<feature type="region of interest" description="Disordered" evidence="3">
    <location>
        <begin position="791"/>
        <end position="838"/>
    </location>
</feature>
<feature type="region of interest" description="Disordered" evidence="3">
    <location>
        <begin position="1100"/>
        <end position="1139"/>
    </location>
</feature>
<feature type="region of interest" description="Disordered" evidence="3">
    <location>
        <begin position="1344"/>
        <end position="1378"/>
    </location>
</feature>
<feature type="coiled-coil region" evidence="1">
    <location>
        <begin position="75"/>
        <end position="119"/>
    </location>
</feature>
<feature type="coiled-coil region" evidence="1">
    <location>
        <begin position="339"/>
        <end position="390"/>
    </location>
</feature>
<feature type="coiled-coil region" evidence="1">
    <location>
        <begin position="610"/>
        <end position="661"/>
    </location>
</feature>
<feature type="compositionally biased region" description="Acidic residues" evidence="3">
    <location>
        <begin position="165"/>
        <end position="181"/>
    </location>
</feature>
<feature type="compositionally biased region" description="Basic and acidic residues" evidence="3">
    <location>
        <begin position="190"/>
        <end position="200"/>
    </location>
</feature>
<feature type="compositionally biased region" description="Acidic residues" evidence="3">
    <location>
        <begin position="436"/>
        <end position="452"/>
    </location>
</feature>
<feature type="compositionally biased region" description="Basic and acidic residues" evidence="3">
    <location>
        <begin position="461"/>
        <end position="472"/>
    </location>
</feature>
<feature type="compositionally biased region" description="Acidic residues" evidence="3">
    <location>
        <begin position="801"/>
        <end position="810"/>
    </location>
</feature>
<feature type="compositionally biased region" description="Acidic residues" evidence="3">
    <location>
        <begin position="821"/>
        <end position="833"/>
    </location>
</feature>
<feature type="compositionally biased region" description="Basic residues" evidence="3">
    <location>
        <begin position="1102"/>
        <end position="1120"/>
    </location>
</feature>
<feature type="compositionally biased region" description="Basic residues" evidence="3">
    <location>
        <begin position="1346"/>
        <end position="1364"/>
    </location>
</feature>
<reference key="1">
    <citation type="journal article" date="2006" name="Nature">
        <title>The DNA sequence and biological annotation of human chromosome 1.</title>
        <authorList>
            <person name="Gregory S.G."/>
            <person name="Barlow K.F."/>
            <person name="McLay K.E."/>
            <person name="Kaul R."/>
            <person name="Swarbreck D."/>
            <person name="Dunham A."/>
            <person name="Scott C.E."/>
            <person name="Howe K.L."/>
            <person name="Woodfine K."/>
            <person name="Spencer C.C.A."/>
            <person name="Jones M.C."/>
            <person name="Gillson C."/>
            <person name="Searle S."/>
            <person name="Zhou Y."/>
            <person name="Kokocinski F."/>
            <person name="McDonald L."/>
            <person name="Evans R."/>
            <person name="Phillips K."/>
            <person name="Atkinson A."/>
            <person name="Cooper R."/>
            <person name="Jones C."/>
            <person name="Hall R.E."/>
            <person name="Andrews T.D."/>
            <person name="Lloyd C."/>
            <person name="Ainscough R."/>
            <person name="Almeida J.P."/>
            <person name="Ambrose K.D."/>
            <person name="Anderson F."/>
            <person name="Andrew R.W."/>
            <person name="Ashwell R.I.S."/>
            <person name="Aubin K."/>
            <person name="Babbage A.K."/>
            <person name="Bagguley C.L."/>
            <person name="Bailey J."/>
            <person name="Beasley H."/>
            <person name="Bethel G."/>
            <person name="Bird C.P."/>
            <person name="Bray-Allen S."/>
            <person name="Brown J.Y."/>
            <person name="Brown A.J."/>
            <person name="Buckley D."/>
            <person name="Burton J."/>
            <person name="Bye J."/>
            <person name="Carder C."/>
            <person name="Chapman J.C."/>
            <person name="Clark S.Y."/>
            <person name="Clarke G."/>
            <person name="Clee C."/>
            <person name="Cobley V."/>
            <person name="Collier R.E."/>
            <person name="Corby N."/>
            <person name="Coville G.J."/>
            <person name="Davies J."/>
            <person name="Deadman R."/>
            <person name="Dunn M."/>
            <person name="Earthrowl M."/>
            <person name="Ellington A.G."/>
            <person name="Errington H."/>
            <person name="Frankish A."/>
            <person name="Frankland J."/>
            <person name="French L."/>
            <person name="Garner P."/>
            <person name="Garnett J."/>
            <person name="Gay L."/>
            <person name="Ghori M.R.J."/>
            <person name="Gibson R."/>
            <person name="Gilby L.M."/>
            <person name="Gillett W."/>
            <person name="Glithero R.J."/>
            <person name="Grafham D.V."/>
            <person name="Griffiths C."/>
            <person name="Griffiths-Jones S."/>
            <person name="Grocock R."/>
            <person name="Hammond S."/>
            <person name="Harrison E.S.I."/>
            <person name="Hart E."/>
            <person name="Haugen E."/>
            <person name="Heath P.D."/>
            <person name="Holmes S."/>
            <person name="Holt K."/>
            <person name="Howden P.J."/>
            <person name="Hunt A.R."/>
            <person name="Hunt S.E."/>
            <person name="Hunter G."/>
            <person name="Isherwood J."/>
            <person name="James R."/>
            <person name="Johnson C."/>
            <person name="Johnson D."/>
            <person name="Joy A."/>
            <person name="Kay M."/>
            <person name="Kershaw J.K."/>
            <person name="Kibukawa M."/>
            <person name="Kimberley A.M."/>
            <person name="King A."/>
            <person name="Knights A.J."/>
            <person name="Lad H."/>
            <person name="Laird G."/>
            <person name="Lawlor S."/>
            <person name="Leongamornlert D.A."/>
            <person name="Lloyd D.M."/>
            <person name="Loveland J."/>
            <person name="Lovell J."/>
            <person name="Lush M.J."/>
            <person name="Lyne R."/>
            <person name="Martin S."/>
            <person name="Mashreghi-Mohammadi M."/>
            <person name="Matthews L."/>
            <person name="Matthews N.S.W."/>
            <person name="McLaren S."/>
            <person name="Milne S."/>
            <person name="Mistry S."/>
            <person name="Moore M.J.F."/>
            <person name="Nickerson T."/>
            <person name="O'Dell C.N."/>
            <person name="Oliver K."/>
            <person name="Palmeiri A."/>
            <person name="Palmer S.A."/>
            <person name="Parker A."/>
            <person name="Patel D."/>
            <person name="Pearce A.V."/>
            <person name="Peck A.I."/>
            <person name="Pelan S."/>
            <person name="Phelps K."/>
            <person name="Phillimore B.J."/>
            <person name="Plumb R."/>
            <person name="Rajan J."/>
            <person name="Raymond C."/>
            <person name="Rouse G."/>
            <person name="Saenphimmachak C."/>
            <person name="Sehra H.K."/>
            <person name="Sheridan E."/>
            <person name="Shownkeen R."/>
            <person name="Sims S."/>
            <person name="Skuce C.D."/>
            <person name="Smith M."/>
            <person name="Steward C."/>
            <person name="Subramanian S."/>
            <person name="Sycamore N."/>
            <person name="Tracey A."/>
            <person name="Tromans A."/>
            <person name="Van Helmond Z."/>
            <person name="Wall M."/>
            <person name="Wallis J.M."/>
            <person name="White S."/>
            <person name="Whitehead S.L."/>
            <person name="Wilkinson J.E."/>
            <person name="Willey D.L."/>
            <person name="Williams H."/>
            <person name="Wilming L."/>
            <person name="Wray P.W."/>
            <person name="Wu Z."/>
            <person name="Coulson A."/>
            <person name="Vaudin M."/>
            <person name="Sulston J.E."/>
            <person name="Durbin R.M."/>
            <person name="Hubbard T."/>
            <person name="Wooster R."/>
            <person name="Dunham I."/>
            <person name="Carter N.P."/>
            <person name="McVean G."/>
            <person name="Ross M.T."/>
            <person name="Harrow J."/>
            <person name="Olson M.V."/>
            <person name="Beck S."/>
            <person name="Rogers J."/>
            <person name="Bentley D.R."/>
        </authorList>
    </citation>
    <scope>NUCLEOTIDE SEQUENCE [LARGE SCALE GENOMIC DNA]</scope>
</reference>
<reference key="2">
    <citation type="submission" date="1999-02" db="EMBL/GenBank/DDBJ databases">
        <authorList>
            <person name="Mei G."/>
            <person name="Yu W."/>
            <person name="Gibbs R.A."/>
        </authorList>
    </citation>
    <scope>NUCLEOTIDE SEQUENCE [LARGE SCALE MRNA] OF 1341-1457</scope>
    <source>
        <tissue>Brain</tissue>
    </source>
</reference>
<reference key="3">
    <citation type="journal article" date="2002" name="Oncogene">
        <title>Positional cloning identifies a novel cyclophilin as a candidate amplified oncogene in 1q21.</title>
        <authorList>
            <person name="Meza-Zepeda L.A."/>
            <person name="Forus A."/>
            <person name="Lygren B."/>
            <person name="Dahlberg A.B."/>
            <person name="Godager L.H."/>
            <person name="South A.P."/>
            <person name="Marenholz I."/>
            <person name="Lioumi M."/>
            <person name="Florenes V.A."/>
            <person name="Maelandsmo G.M."/>
            <person name="Serra M."/>
            <person name="Mischke D."/>
            <person name="Nizetic D."/>
            <person name="Ragoussis J."/>
            <person name="Tarkkanen M."/>
            <person name="Nesland J.M."/>
            <person name="Knuutila S."/>
            <person name="Myklebost O."/>
        </authorList>
    </citation>
    <scope>IDENTIFICATION</scope>
    <scope>TISSUE SPECIFICITY</scope>
</reference>
<reference key="4">
    <citation type="journal article" date="2005" name="Mol. Biol. Evol.">
        <title>A novel gene family NBPF: intricate structure generated by gene duplications during primate evolution.</title>
        <authorList>
            <person name="Vandepoele K."/>
            <person name="Van Roy N."/>
            <person name="Staes K."/>
            <person name="Speleman F."/>
            <person name="van Roy F."/>
        </authorList>
    </citation>
    <scope>TISSUE SPECIFICITY</scope>
</reference>
<evidence type="ECO:0000255" key="1"/>
<evidence type="ECO:0000255" key="2">
    <source>
        <dbReference type="PROSITE-ProRule" id="PRU00647"/>
    </source>
</evidence>
<evidence type="ECO:0000256" key="3">
    <source>
        <dbReference type="SAM" id="MobiDB-lite"/>
    </source>
</evidence>
<evidence type="ECO:0000269" key="4">
    <source>
    </source>
</evidence>
<evidence type="ECO:0000269" key="5">
    <source>
    </source>
</evidence>
<evidence type="ECO:0000305" key="6"/>
<evidence type="ECO:0000312" key="7">
    <source>
        <dbReference type="HGNC" id="HGNC:24297"/>
    </source>
</evidence>
<dbReference type="EMBL" id="AL139152">
    <property type="protein sequence ID" value="CAI22485.1"/>
    <property type="status" value="ALT_INIT"/>
    <property type="molecule type" value="Genomic_DNA"/>
</dbReference>
<dbReference type="EMBL" id="AC244394">
    <property type="status" value="NOT_ANNOTATED_CDS"/>
    <property type="molecule type" value="Genomic_DNA"/>
</dbReference>
<dbReference type="EMBL" id="AF131738">
    <property type="protein sequence ID" value="AAD20027.1"/>
    <property type="molecule type" value="mRNA"/>
</dbReference>
<dbReference type="CCDS" id="CCDS72881.1"/>
<dbReference type="RefSeq" id="NP_001265070.1">
    <property type="nucleotide sequence ID" value="NM_001278141.3"/>
</dbReference>
<dbReference type="RefSeq" id="XP_047303044.1">
    <property type="nucleotide sequence ID" value="XM_047447088.1"/>
</dbReference>
<dbReference type="RefSeq" id="XP_054190588.1">
    <property type="nucleotide sequence ID" value="XM_054334613.1"/>
</dbReference>
<dbReference type="SMR" id="Q5TAG4"/>
<dbReference type="FunCoup" id="Q5TAG4">
    <property type="interactions" value="10"/>
</dbReference>
<dbReference type="IntAct" id="Q5TAG4">
    <property type="interactions" value="2"/>
</dbReference>
<dbReference type="MINT" id="Q5TAG4"/>
<dbReference type="STRING" id="9606.ENSP00000478609"/>
<dbReference type="GlyGen" id="Q5TAG4">
    <property type="glycosylation" value="2 sites"/>
</dbReference>
<dbReference type="iPTMnet" id="Q5TAG4"/>
<dbReference type="PhosphoSitePlus" id="Q5TAG4"/>
<dbReference type="BioMuta" id="NBPF12"/>
<dbReference type="DMDM" id="152123241"/>
<dbReference type="jPOST" id="Q5TAG4"/>
<dbReference type="MassIVE" id="Q5TAG4"/>
<dbReference type="PaxDb" id="9606-ENSP00000478609"/>
<dbReference type="PeptideAtlas" id="Q5TAG4"/>
<dbReference type="ProteomicsDB" id="64850"/>
<dbReference type="Antibodypedia" id="73290">
    <property type="antibodies" value="12 antibodies from 6 providers"/>
</dbReference>
<dbReference type="Ensembl" id="ENST00000617931.4">
    <property type="protein sequence ID" value="ENSP00000478609.1"/>
    <property type="gene ID" value="ENSG00000268043.9"/>
</dbReference>
<dbReference type="Ensembl" id="ENST00000698835.1">
    <property type="protein sequence ID" value="ENSP00000513971.1"/>
    <property type="gene ID" value="ENSG00000268043.9"/>
</dbReference>
<dbReference type="GeneID" id="149013"/>
<dbReference type="KEGG" id="hsa:149013"/>
<dbReference type="MANE-Select" id="ENST00000698835.1">
    <property type="protein sequence ID" value="ENSP00000513971.1"/>
    <property type="RefSeq nucleotide sequence ID" value="NM_001278141.3"/>
    <property type="RefSeq protein sequence ID" value="NP_001265070.1"/>
</dbReference>
<dbReference type="UCSC" id="uc057kdn.1">
    <property type="organism name" value="human"/>
</dbReference>
<dbReference type="AGR" id="HGNC:24297"/>
<dbReference type="CTD" id="149013"/>
<dbReference type="DisGeNET" id="149013"/>
<dbReference type="GeneCards" id="NBPF12"/>
<dbReference type="HGNC" id="HGNC:24297">
    <property type="gene designation" value="NBPF12"/>
</dbReference>
<dbReference type="HPA" id="ENSG00000268043">
    <property type="expression patterns" value="Tissue enhanced (pancreas)"/>
</dbReference>
<dbReference type="MIM" id="608607">
    <property type="type" value="gene"/>
</dbReference>
<dbReference type="neXtProt" id="NX_Q5TAG4"/>
<dbReference type="OpenTargets" id="ENSG00000268043"/>
<dbReference type="VEuPathDB" id="HostDB:ENSG00000268043"/>
<dbReference type="GeneTree" id="ENSGT00420000029746"/>
<dbReference type="InParanoid" id="Q5TAG4"/>
<dbReference type="OrthoDB" id="9665129at2759"/>
<dbReference type="PAN-GO" id="Q5TAG4">
    <property type="GO annotations" value="0 GO annotations based on evolutionary models"/>
</dbReference>
<dbReference type="PhylomeDB" id="Q5TAG4"/>
<dbReference type="TreeFam" id="TF341151"/>
<dbReference type="PathwayCommons" id="Q5TAG4"/>
<dbReference type="SignaLink" id="Q5TAG4"/>
<dbReference type="BioGRID-ORCS" id="149013">
    <property type="hits" value="18 hits in 192 CRISPR screens"/>
</dbReference>
<dbReference type="GenomeRNAi" id="149013"/>
<dbReference type="Pharos" id="Q5TAG4">
    <property type="development level" value="Tdark"/>
</dbReference>
<dbReference type="PRO" id="PR:Q5TAG4"/>
<dbReference type="Proteomes" id="UP000005640">
    <property type="component" value="Chromosome 1"/>
</dbReference>
<dbReference type="RNAct" id="Q5TAG4">
    <property type="molecule type" value="protein"/>
</dbReference>
<dbReference type="Bgee" id="ENSG00000268043">
    <property type="expression patterns" value="Expressed in sural nerve and 99 other cell types or tissues"/>
</dbReference>
<dbReference type="ExpressionAtlas" id="Q5TAG4">
    <property type="expression patterns" value="baseline and differential"/>
</dbReference>
<dbReference type="GO" id="GO:0005737">
    <property type="term" value="C:cytoplasm"/>
    <property type="evidence" value="ECO:0007669"/>
    <property type="project" value="UniProtKB-SubCell"/>
</dbReference>
<dbReference type="InterPro" id="IPR055306">
    <property type="entry name" value="NBPF"/>
</dbReference>
<dbReference type="InterPro" id="IPR010630">
    <property type="entry name" value="Olduvai_dom"/>
</dbReference>
<dbReference type="PANTHER" id="PTHR14199:SF35">
    <property type="entry name" value="NEUROBLASTOMA BREAKPOINT FAMILY MEMBER 1-RELATED"/>
    <property type="match status" value="1"/>
</dbReference>
<dbReference type="PANTHER" id="PTHR14199">
    <property type="entry name" value="NEUROBLASTOMA BREAKPOINT FAMILY MEMBER 6-LIKE PROTEIN"/>
    <property type="match status" value="1"/>
</dbReference>
<dbReference type="Pfam" id="PF06758">
    <property type="entry name" value="Olduvai"/>
    <property type="match status" value="11"/>
</dbReference>
<dbReference type="SMART" id="SM01148">
    <property type="entry name" value="DUF1220"/>
    <property type="match status" value="11"/>
</dbReference>
<dbReference type="PROSITE" id="PS51316">
    <property type="entry name" value="ODV"/>
    <property type="match status" value="11"/>
</dbReference>
<accession>Q5TAG4</accession>
<accession>A0A087WUF1</accession>
<accession>O95877</accession>